<keyword id="KW-0963">Cytoplasm</keyword>
<keyword id="KW-0583">PHB biosynthesis</keyword>
<reference key="1">
    <citation type="journal article" date="1993" name="Appl. Microbiol. Biotechnol.">
        <title>Cloning and molecular analysis of the poly(3-hydroxybutyric acid) biosynthetic genes of Thiocystis violacea.</title>
        <authorList>
            <person name="Liebergesell M."/>
            <person name="Steinbuechel A."/>
        </authorList>
    </citation>
    <scope>NUCLEOTIDE SEQUENCE [GENOMIC DNA]</scope>
    <source>
        <strain>2311 / DSM 208</strain>
    </source>
</reference>
<reference key="2">
    <citation type="journal article" date="1992" name="FEMS Microbiol. Rev.">
        <title>Molecular basis for biosynthesis and accumulation of polyhydroxyalkanoic acids in bacteria.</title>
        <authorList>
            <person name="Steinbuechel A."/>
            <person name="Hustede E."/>
            <person name="Liebergesell M."/>
            <person name="Pieper U."/>
            <person name="Timm A."/>
            <person name="Valentin H."/>
        </authorList>
    </citation>
    <scope>GENE NAME</scope>
</reference>
<gene>
    <name evidence="4" type="primary">phaE</name>
</gene>
<comment type="function">
    <text evidence="1">Polymerizes D(-)-3-hydroxybutyryl-CoA to create polyhydroxybutyrate (PHB) which consists of thousands of hydroxybutyrate molecules linked end to end. This subunit has no catalytic activity but enhances the activity of PhaC, the catalytic subunit.</text>
</comment>
<comment type="pathway">
    <text>Biopolymer metabolism; poly-(R)-3-hydroxybutanoate biosynthesis.</text>
</comment>
<comment type="subunit">
    <text evidence="2">Forms a heterodimer with PhaC, which may multimerize in the presence of 3-hydroxybutyryl-CoA.</text>
</comment>
<comment type="subcellular location">
    <subcellularLocation>
        <location evidence="1">Cytoplasm</location>
    </subcellularLocation>
</comment>
<comment type="miscellaneous">
    <text evidence="6">Poly(3-hydroxyalkanoic acids) (PHA), of which PHB is among the most common compounds, has potential uses as a renewable, biodegradable thermoplastic. PHB serves as an intracellular energy reserve material when cells grow under conditions of nutrient limitation.</text>
</comment>
<comment type="similarity">
    <text evidence="6">Belongs to the PHA/PHB synthase family. Type III PhaE subfamily.</text>
</comment>
<evidence type="ECO:0000250" key="1">
    <source>
        <dbReference type="UniProtKB" id="P45372"/>
    </source>
</evidence>
<evidence type="ECO:0000250" key="2">
    <source>
        <dbReference type="UniProtKB" id="P73389"/>
    </source>
</evidence>
<evidence type="ECO:0000256" key="3">
    <source>
        <dbReference type="SAM" id="MobiDB-lite"/>
    </source>
</evidence>
<evidence type="ECO:0000303" key="4">
    <source>
    </source>
</evidence>
<evidence type="ECO:0000303" key="5">
    <source>
    </source>
</evidence>
<evidence type="ECO:0000305" key="6"/>
<dbReference type="EMBL" id="L01113">
    <property type="protein sequence ID" value="AAB02861.1"/>
    <property type="molecule type" value="Genomic_DNA"/>
</dbReference>
<dbReference type="EMBL" id="S54369">
    <property type="protein sequence ID" value="AAC60429.2"/>
    <property type="molecule type" value="Genomic_DNA"/>
</dbReference>
<dbReference type="PIR" id="C48376">
    <property type="entry name" value="C48376"/>
</dbReference>
<dbReference type="SMR" id="P45367"/>
<dbReference type="UniPathway" id="UPA00917"/>
<dbReference type="GO" id="GO:0005737">
    <property type="term" value="C:cytoplasm"/>
    <property type="evidence" value="ECO:0007669"/>
    <property type="project" value="UniProtKB-SubCell"/>
</dbReference>
<dbReference type="GO" id="GO:0042619">
    <property type="term" value="P:poly-hydroxybutyrate biosynthetic process"/>
    <property type="evidence" value="ECO:0007669"/>
    <property type="project" value="UniProtKB-KW"/>
</dbReference>
<dbReference type="InterPro" id="IPR010123">
    <property type="entry name" value="PHA_synth_III_E"/>
</dbReference>
<dbReference type="NCBIfam" id="TIGR01834">
    <property type="entry name" value="PHA_synth_III_E"/>
    <property type="match status" value="1"/>
</dbReference>
<dbReference type="Pfam" id="PF09712">
    <property type="entry name" value="PHA_synth_III_E"/>
    <property type="match status" value="1"/>
</dbReference>
<feature type="chain" id="PRO_0000066401" description="Poly(3-hydroxyalkanoate) polymerase subunit PhaE">
    <location>
        <begin position="1"/>
        <end position="364"/>
    </location>
</feature>
<feature type="region of interest" description="Disordered" evidence="3">
    <location>
        <begin position="322"/>
        <end position="364"/>
    </location>
</feature>
<feature type="compositionally biased region" description="Low complexity" evidence="3">
    <location>
        <begin position="324"/>
        <end position="338"/>
    </location>
</feature>
<feature type="sequence conflict" description="In Ref. 1; AAC60429." evidence="6" ref="1">
    <original>SG</original>
    <variation>FD</variation>
    <location>
        <begin position="161"/>
        <end position="162"/>
    </location>
</feature>
<feature type="sequence conflict" description="In Ref. 1; AAC60429." evidence="6" ref="1">
    <original>HQ</original>
    <variation>QE</variation>
    <location>
        <begin position="181"/>
        <end position="182"/>
    </location>
</feature>
<organism>
    <name type="scientific">Thiocystis violacea</name>
    <dbReference type="NCBI Taxonomy" id="13725"/>
    <lineage>
        <taxon>Bacteria</taxon>
        <taxon>Pseudomonadati</taxon>
        <taxon>Pseudomonadota</taxon>
        <taxon>Gammaproteobacteria</taxon>
        <taxon>Chromatiales</taxon>
        <taxon>Chromatiaceae</taxon>
        <taxon>Thiocystis</taxon>
    </lineage>
</organism>
<name>PHAE_THIVI</name>
<protein>
    <recommendedName>
        <fullName evidence="5">Poly(3-hydroxyalkanoate) polymerase subunit PhaE</fullName>
        <shortName>PHA polymerase</shortName>
    </recommendedName>
    <alternativeName>
        <fullName evidence="5">ORF2</fullName>
    </alternativeName>
    <alternativeName>
        <fullName>PHB synthase subunit PhaE</fullName>
    </alternativeName>
    <alternativeName>
        <fullName>Poly(3-hydroxyalkanoate) synthase subunit PhaE</fullName>
        <shortName evidence="5">PHA synthase</shortName>
        <shortName>Polyhydroxyalkanoic acid synthase</shortName>
    </alternativeName>
    <alternativeName>
        <fullName>Poly(3-hydroxybutyrate) polymerase subunit PhaE</fullName>
        <shortName>PHB polymerase</shortName>
        <shortName>Poly-beta-hydroxybutyrate polymerase</shortName>
    </alternativeName>
</protein>
<proteinExistence type="inferred from homology"/>
<sequence length="364" mass="41387">MSNDSFFNNDWLELQRKYWDSWSEMGRKAMGLENQQTLTTPWEGALDHWWKAMSPATPDFSKTFMEKMMEQGKNFFRMAETFANTPEDTTATNGLTWWTKALEDMQKQFSGSLDDGGNSMQRMMSFWELPIDNWQRMMSSMSPMPGDMLRNMPHEQLKDRSGRALSAPGLGYTREEQSQYHQLTRTAMDYQAALQEYTGFYSQLGMKSVERMGDFIQGVIDSGKSIDSARTLYDNWISCCETVYAAEVATPEYAQIHGRLVNAQMALKRRMAIMVDENLGAMNMPTRSELRTLQDRLQETRRDNKQLHRALHALEKQVAALSGKTPTTALKAPAPATKATEKPATRATTRRKTAAKPTGGTADD</sequence>
<accession>P45367</accession>